<comment type="function">
    <text evidence="1">This protein is one of the early assembly proteins of the 50S ribosomal subunit, although it is not seen to bind rRNA by itself. It is important during the early stages of 50S assembly.</text>
</comment>
<comment type="subunit">
    <text evidence="1">Part of the 50S ribosomal subunit.</text>
</comment>
<comment type="similarity">
    <text evidence="1">Belongs to the universal ribosomal protein uL13 family.</text>
</comment>
<organism>
    <name type="scientific">Alkalilimnicola ehrlichii (strain ATCC BAA-1101 / DSM 17681 / MLHE-1)</name>
    <dbReference type="NCBI Taxonomy" id="187272"/>
    <lineage>
        <taxon>Bacteria</taxon>
        <taxon>Pseudomonadati</taxon>
        <taxon>Pseudomonadota</taxon>
        <taxon>Gammaproteobacteria</taxon>
        <taxon>Chromatiales</taxon>
        <taxon>Ectothiorhodospiraceae</taxon>
        <taxon>Alkalilimnicola</taxon>
    </lineage>
</organism>
<evidence type="ECO:0000255" key="1">
    <source>
        <dbReference type="HAMAP-Rule" id="MF_01366"/>
    </source>
</evidence>
<evidence type="ECO:0000305" key="2"/>
<accession>Q0A6F3</accession>
<sequence>MKTYSAKPADVQRDWYVVDANGKTLGRLASEVAYRLRGKHKPEYTPHVDTGDYIVVVNAEKIAVTGNKASDKMYHQHTGYIGNMKSISFEKLIDKAPERVIEKAVKGMLPKNRLGRAMIKKLKVYAGGEHRHAAQQPQPLDI</sequence>
<name>RL13_ALKEH</name>
<feature type="chain" id="PRO_0000261677" description="Large ribosomal subunit protein uL13">
    <location>
        <begin position="1"/>
        <end position="142"/>
    </location>
</feature>
<keyword id="KW-1185">Reference proteome</keyword>
<keyword id="KW-0687">Ribonucleoprotein</keyword>
<keyword id="KW-0689">Ribosomal protein</keyword>
<protein>
    <recommendedName>
        <fullName evidence="1">Large ribosomal subunit protein uL13</fullName>
    </recommendedName>
    <alternativeName>
        <fullName evidence="2">50S ribosomal protein L13</fullName>
    </alternativeName>
</protein>
<reference key="1">
    <citation type="submission" date="2006-08" db="EMBL/GenBank/DDBJ databases">
        <title>Complete sequence of Alkalilimnicola ehrilichei MLHE-1.</title>
        <authorList>
            <person name="Copeland A."/>
            <person name="Lucas S."/>
            <person name="Lapidus A."/>
            <person name="Barry K."/>
            <person name="Detter J.C."/>
            <person name="Glavina del Rio T."/>
            <person name="Hammon N."/>
            <person name="Israni S."/>
            <person name="Dalin E."/>
            <person name="Tice H."/>
            <person name="Pitluck S."/>
            <person name="Sims D."/>
            <person name="Brettin T."/>
            <person name="Bruce D."/>
            <person name="Han C."/>
            <person name="Tapia R."/>
            <person name="Gilna P."/>
            <person name="Schmutz J."/>
            <person name="Larimer F."/>
            <person name="Land M."/>
            <person name="Hauser L."/>
            <person name="Kyrpides N."/>
            <person name="Mikhailova N."/>
            <person name="Oremland R.S."/>
            <person name="Hoeft S.E."/>
            <person name="Switzer-Blum J."/>
            <person name="Kulp T."/>
            <person name="King G."/>
            <person name="Tabita R."/>
            <person name="Witte B."/>
            <person name="Santini J.M."/>
            <person name="Basu P."/>
            <person name="Hollibaugh J.T."/>
            <person name="Xie G."/>
            <person name="Stolz J.F."/>
            <person name="Richardson P."/>
        </authorList>
    </citation>
    <scope>NUCLEOTIDE SEQUENCE [LARGE SCALE GENOMIC DNA]</scope>
    <source>
        <strain>ATCC BAA-1101 / DSM 17681 / MLHE-1</strain>
    </source>
</reference>
<proteinExistence type="inferred from homology"/>
<gene>
    <name evidence="1" type="primary">rplM</name>
    <name type="ordered locus">Mlg_2242</name>
</gene>
<dbReference type="EMBL" id="CP000453">
    <property type="protein sequence ID" value="ABI57584.1"/>
    <property type="molecule type" value="Genomic_DNA"/>
</dbReference>
<dbReference type="RefSeq" id="WP_011629978.1">
    <property type="nucleotide sequence ID" value="NC_008340.1"/>
</dbReference>
<dbReference type="SMR" id="Q0A6F3"/>
<dbReference type="KEGG" id="aeh:Mlg_2242"/>
<dbReference type="eggNOG" id="COG0102">
    <property type="taxonomic scope" value="Bacteria"/>
</dbReference>
<dbReference type="HOGENOM" id="CLU_082184_2_2_6"/>
<dbReference type="OrthoDB" id="9801330at2"/>
<dbReference type="Proteomes" id="UP000001962">
    <property type="component" value="Chromosome"/>
</dbReference>
<dbReference type="GO" id="GO:0022625">
    <property type="term" value="C:cytosolic large ribosomal subunit"/>
    <property type="evidence" value="ECO:0007669"/>
    <property type="project" value="TreeGrafter"/>
</dbReference>
<dbReference type="GO" id="GO:0003729">
    <property type="term" value="F:mRNA binding"/>
    <property type="evidence" value="ECO:0007669"/>
    <property type="project" value="TreeGrafter"/>
</dbReference>
<dbReference type="GO" id="GO:0003735">
    <property type="term" value="F:structural constituent of ribosome"/>
    <property type="evidence" value="ECO:0007669"/>
    <property type="project" value="InterPro"/>
</dbReference>
<dbReference type="GO" id="GO:0017148">
    <property type="term" value="P:negative regulation of translation"/>
    <property type="evidence" value="ECO:0007669"/>
    <property type="project" value="TreeGrafter"/>
</dbReference>
<dbReference type="GO" id="GO:0006412">
    <property type="term" value="P:translation"/>
    <property type="evidence" value="ECO:0007669"/>
    <property type="project" value="UniProtKB-UniRule"/>
</dbReference>
<dbReference type="CDD" id="cd00392">
    <property type="entry name" value="Ribosomal_L13"/>
    <property type="match status" value="1"/>
</dbReference>
<dbReference type="FunFam" id="3.90.1180.10:FF:000001">
    <property type="entry name" value="50S ribosomal protein L13"/>
    <property type="match status" value="1"/>
</dbReference>
<dbReference type="Gene3D" id="3.90.1180.10">
    <property type="entry name" value="Ribosomal protein L13"/>
    <property type="match status" value="1"/>
</dbReference>
<dbReference type="HAMAP" id="MF_01366">
    <property type="entry name" value="Ribosomal_uL13"/>
    <property type="match status" value="1"/>
</dbReference>
<dbReference type="InterPro" id="IPR005822">
    <property type="entry name" value="Ribosomal_uL13"/>
</dbReference>
<dbReference type="InterPro" id="IPR005823">
    <property type="entry name" value="Ribosomal_uL13_bac-type"/>
</dbReference>
<dbReference type="InterPro" id="IPR023563">
    <property type="entry name" value="Ribosomal_uL13_CS"/>
</dbReference>
<dbReference type="InterPro" id="IPR036899">
    <property type="entry name" value="Ribosomal_uL13_sf"/>
</dbReference>
<dbReference type="NCBIfam" id="TIGR01066">
    <property type="entry name" value="rplM_bact"/>
    <property type="match status" value="1"/>
</dbReference>
<dbReference type="PANTHER" id="PTHR11545:SF2">
    <property type="entry name" value="LARGE RIBOSOMAL SUBUNIT PROTEIN UL13M"/>
    <property type="match status" value="1"/>
</dbReference>
<dbReference type="PANTHER" id="PTHR11545">
    <property type="entry name" value="RIBOSOMAL PROTEIN L13"/>
    <property type="match status" value="1"/>
</dbReference>
<dbReference type="Pfam" id="PF00572">
    <property type="entry name" value="Ribosomal_L13"/>
    <property type="match status" value="1"/>
</dbReference>
<dbReference type="PIRSF" id="PIRSF002181">
    <property type="entry name" value="Ribosomal_L13"/>
    <property type="match status" value="1"/>
</dbReference>
<dbReference type="SUPFAM" id="SSF52161">
    <property type="entry name" value="Ribosomal protein L13"/>
    <property type="match status" value="1"/>
</dbReference>
<dbReference type="PROSITE" id="PS00783">
    <property type="entry name" value="RIBOSOMAL_L13"/>
    <property type="match status" value="1"/>
</dbReference>